<protein>
    <recommendedName>
        <fullName evidence="1">DNA-directed RNA polymerase subunit beta</fullName>
        <shortName evidence="1">RNAP subunit beta</shortName>
        <ecNumber evidence="1">2.7.7.6</ecNumber>
    </recommendedName>
    <alternativeName>
        <fullName evidence="1">RNA polymerase subunit beta</fullName>
    </alternativeName>
    <alternativeName>
        <fullName evidence="1">Transcriptase subunit beta</fullName>
    </alternativeName>
</protein>
<evidence type="ECO:0000255" key="1">
    <source>
        <dbReference type="HAMAP-Rule" id="MF_01321"/>
    </source>
</evidence>
<evidence type="ECO:0000256" key="2">
    <source>
        <dbReference type="SAM" id="MobiDB-lite"/>
    </source>
</evidence>
<keyword id="KW-0240">DNA-directed RNA polymerase</keyword>
<keyword id="KW-0548">Nucleotidyltransferase</keyword>
<keyword id="KW-0804">Transcription</keyword>
<keyword id="KW-0808">Transferase</keyword>
<reference key="1">
    <citation type="journal article" date="2007" name="PLoS Genet.">
        <title>Patterns and implications of gene gain and loss in the evolution of Prochlorococcus.</title>
        <authorList>
            <person name="Kettler G.C."/>
            <person name="Martiny A.C."/>
            <person name="Huang K."/>
            <person name="Zucker J."/>
            <person name="Coleman M.L."/>
            <person name="Rodrigue S."/>
            <person name="Chen F."/>
            <person name="Lapidus A."/>
            <person name="Ferriera S."/>
            <person name="Johnson J."/>
            <person name="Steglich C."/>
            <person name="Church G.M."/>
            <person name="Richardson P."/>
            <person name="Chisholm S.W."/>
        </authorList>
    </citation>
    <scope>NUCLEOTIDE SEQUENCE [LARGE SCALE GENOMIC DNA]</scope>
    <source>
        <strain>NATL1A</strain>
    </source>
</reference>
<name>RPOB_PROM1</name>
<accession>A2C4N2</accession>
<dbReference type="EC" id="2.7.7.6" evidence="1"/>
<dbReference type="EMBL" id="CP000553">
    <property type="protein sequence ID" value="ABM76442.1"/>
    <property type="molecule type" value="Genomic_DNA"/>
</dbReference>
<dbReference type="RefSeq" id="WP_011824421.1">
    <property type="nucleotide sequence ID" value="NC_008819.1"/>
</dbReference>
<dbReference type="SMR" id="A2C4N2"/>
<dbReference type="KEGG" id="pme:NATL1_18861"/>
<dbReference type="eggNOG" id="COG0085">
    <property type="taxonomic scope" value="Bacteria"/>
</dbReference>
<dbReference type="HOGENOM" id="CLU_000524_4_1_3"/>
<dbReference type="Proteomes" id="UP000002592">
    <property type="component" value="Chromosome"/>
</dbReference>
<dbReference type="GO" id="GO:0000428">
    <property type="term" value="C:DNA-directed RNA polymerase complex"/>
    <property type="evidence" value="ECO:0007669"/>
    <property type="project" value="UniProtKB-KW"/>
</dbReference>
<dbReference type="GO" id="GO:0003677">
    <property type="term" value="F:DNA binding"/>
    <property type="evidence" value="ECO:0007669"/>
    <property type="project" value="UniProtKB-UniRule"/>
</dbReference>
<dbReference type="GO" id="GO:0003899">
    <property type="term" value="F:DNA-directed RNA polymerase activity"/>
    <property type="evidence" value="ECO:0007669"/>
    <property type="project" value="UniProtKB-UniRule"/>
</dbReference>
<dbReference type="GO" id="GO:0032549">
    <property type="term" value="F:ribonucleoside binding"/>
    <property type="evidence" value="ECO:0007669"/>
    <property type="project" value="InterPro"/>
</dbReference>
<dbReference type="GO" id="GO:0006351">
    <property type="term" value="P:DNA-templated transcription"/>
    <property type="evidence" value="ECO:0007669"/>
    <property type="project" value="UniProtKB-UniRule"/>
</dbReference>
<dbReference type="CDD" id="cd00653">
    <property type="entry name" value="RNA_pol_B_RPB2"/>
    <property type="match status" value="1"/>
</dbReference>
<dbReference type="FunFam" id="3.90.1800.10:FF:000001">
    <property type="entry name" value="DNA-directed RNA polymerase subunit beta"/>
    <property type="match status" value="1"/>
</dbReference>
<dbReference type="Gene3D" id="2.40.50.100">
    <property type="match status" value="1"/>
</dbReference>
<dbReference type="Gene3D" id="2.40.50.150">
    <property type="match status" value="1"/>
</dbReference>
<dbReference type="Gene3D" id="3.90.1100.10">
    <property type="match status" value="1"/>
</dbReference>
<dbReference type="Gene3D" id="2.30.150.10">
    <property type="entry name" value="DNA-directed RNA polymerase, beta subunit, external 1 domain"/>
    <property type="match status" value="1"/>
</dbReference>
<dbReference type="Gene3D" id="2.40.270.10">
    <property type="entry name" value="DNA-directed RNA polymerase, subunit 2, domain 6"/>
    <property type="match status" value="1"/>
</dbReference>
<dbReference type="Gene3D" id="3.90.1800.10">
    <property type="entry name" value="RNA polymerase alpha subunit dimerisation domain"/>
    <property type="match status" value="1"/>
</dbReference>
<dbReference type="Gene3D" id="3.90.1110.10">
    <property type="entry name" value="RNA polymerase Rpb2, domain 2"/>
    <property type="match status" value="1"/>
</dbReference>
<dbReference type="HAMAP" id="MF_01321">
    <property type="entry name" value="RNApol_bact_RpoB"/>
    <property type="match status" value="1"/>
</dbReference>
<dbReference type="InterPro" id="IPR042107">
    <property type="entry name" value="DNA-dir_RNA_pol_bsu_ext_1_sf"/>
</dbReference>
<dbReference type="InterPro" id="IPR019462">
    <property type="entry name" value="DNA-dir_RNA_pol_bsu_external_1"/>
</dbReference>
<dbReference type="InterPro" id="IPR015712">
    <property type="entry name" value="DNA-dir_RNA_pol_su2"/>
</dbReference>
<dbReference type="InterPro" id="IPR007120">
    <property type="entry name" value="DNA-dir_RNAP_su2_dom"/>
</dbReference>
<dbReference type="InterPro" id="IPR037033">
    <property type="entry name" value="DNA-dir_RNAP_su2_hyb_sf"/>
</dbReference>
<dbReference type="InterPro" id="IPR010243">
    <property type="entry name" value="RNA_pol_bsu_bac"/>
</dbReference>
<dbReference type="InterPro" id="IPR007121">
    <property type="entry name" value="RNA_pol_bsu_CS"/>
</dbReference>
<dbReference type="InterPro" id="IPR007644">
    <property type="entry name" value="RNA_pol_bsu_protrusion"/>
</dbReference>
<dbReference type="InterPro" id="IPR007642">
    <property type="entry name" value="RNA_pol_Rpb2_2"/>
</dbReference>
<dbReference type="InterPro" id="IPR037034">
    <property type="entry name" value="RNA_pol_Rpb2_2_sf"/>
</dbReference>
<dbReference type="InterPro" id="IPR007645">
    <property type="entry name" value="RNA_pol_Rpb2_3"/>
</dbReference>
<dbReference type="InterPro" id="IPR007641">
    <property type="entry name" value="RNA_pol_Rpb2_7"/>
</dbReference>
<dbReference type="InterPro" id="IPR014724">
    <property type="entry name" value="RNA_pol_RPB2_OB-fold"/>
</dbReference>
<dbReference type="NCBIfam" id="NF001616">
    <property type="entry name" value="PRK00405.1"/>
    <property type="match status" value="1"/>
</dbReference>
<dbReference type="NCBIfam" id="TIGR02013">
    <property type="entry name" value="rpoB"/>
    <property type="match status" value="1"/>
</dbReference>
<dbReference type="PANTHER" id="PTHR20856">
    <property type="entry name" value="DNA-DIRECTED RNA POLYMERASE I SUBUNIT 2"/>
    <property type="match status" value="1"/>
</dbReference>
<dbReference type="Pfam" id="PF04563">
    <property type="entry name" value="RNA_pol_Rpb2_1"/>
    <property type="match status" value="1"/>
</dbReference>
<dbReference type="Pfam" id="PF04561">
    <property type="entry name" value="RNA_pol_Rpb2_2"/>
    <property type="match status" value="1"/>
</dbReference>
<dbReference type="Pfam" id="PF04565">
    <property type="entry name" value="RNA_pol_Rpb2_3"/>
    <property type="match status" value="1"/>
</dbReference>
<dbReference type="Pfam" id="PF10385">
    <property type="entry name" value="RNA_pol_Rpb2_45"/>
    <property type="match status" value="1"/>
</dbReference>
<dbReference type="Pfam" id="PF00562">
    <property type="entry name" value="RNA_pol_Rpb2_6"/>
    <property type="match status" value="1"/>
</dbReference>
<dbReference type="Pfam" id="PF04560">
    <property type="entry name" value="RNA_pol_Rpb2_7"/>
    <property type="match status" value="1"/>
</dbReference>
<dbReference type="SUPFAM" id="SSF64484">
    <property type="entry name" value="beta and beta-prime subunits of DNA dependent RNA-polymerase"/>
    <property type="match status" value="1"/>
</dbReference>
<dbReference type="PROSITE" id="PS01166">
    <property type="entry name" value="RNA_POL_BETA"/>
    <property type="match status" value="1"/>
</dbReference>
<feature type="chain" id="PRO_0000300373" description="DNA-directed RNA polymerase subunit beta">
    <location>
        <begin position="1"/>
        <end position="1095"/>
    </location>
</feature>
<feature type="region of interest" description="Disordered" evidence="2">
    <location>
        <begin position="1069"/>
        <end position="1095"/>
    </location>
</feature>
<sequence length="1095" mass="122570">MSRSAIQVAKAATYLPDLVEVQRSSFKWFLDKGLIEELDNFSPITDYTGKLELHFIGAEYKLKRPRHDVEEAKRRDATFASQMYVTCRLVNKETGEIKEQEVFIGELPLMTERGTFIINGAERVIVNQIVRSPGVYFKDEQDKNGRRTYNASVIPNRGAWLKFETDKNDLLHVRVDKTRKINAHVLMRAMGLSDNDVIDKLRHPEFYKKSIDAANEEGISSEDQALLELYKKLRPGEPPSVSGGQQLLQTRFFDPKRYDLGRVGRYKINKKLRLTIPDNLRTLTNEDVLSTLDYLINLELDVGGATLDDIDHLGNRRVRSVGELLQNQVRVGLNRLERIIKERMTVGETDSLTPAQLVNPKPLVAAIKEFFGSSQLSQFMDQTNPLAELTHKRRISALGPGGLTRERAGFAVRDIHPSHYGRLCPIETPEGPNAGLINSLATHARVNEYGFIETPFWKVENGRLIKEGDPIYLSADLEDECRVAPGDVATNEEGKIMAELVPVRYRQDFETVSPEQVDYVQLSPVQVISVAASLIPFLEHDDANRALMGSNMQRQAVPLLRPERPLVGTGLETQVARDSGMVPISKVNGTVSYVDANAIVVTDDEGNDHTHYLQKYQRSNQDTCLNHRPIVFNGDPVIVGQVLADGSACEGGEIALGQNVLIAYMPWEGYNYEDAILVSERLVKDDLYTSVHIEKYEIEARQTKLGPEEITREIPNVSEENLGNLDEMGIIRIGAYVESGDILVGKVTPKGESDQPPEEKLLRAIFGEKARDVRDNSLRVPSTERGRVVDVRIYTREQGDELPPGANMVVRVYVAQRRKIQVGDKMAGRHGNKGIISRILPREDMPYLPDGTPVDICLNPLGVPSRMNVGQVFELLMGWAASNLDCRVKIVPFDEMYGPEMSNQTVQAYLKEAAKQPGKSWVYNPKDPGKLLLKDGRTGEPFDQPVAVGYAHFLKLVHLVDDKIHARSTGPYSLVTQQPLGGKAQQGGQRLGEMEVWALEAYGAAYTLQELLTVKSDDMQGRNEALNSIVKGKPIPRPGTPESFKVLMRELQSLGLDIGVYTDDGKEVDLMQDVNPRRSTPSRPTYESLGKEYEE</sequence>
<gene>
    <name evidence="1" type="primary">rpoB</name>
    <name type="ordered locus">NATL1_18861</name>
</gene>
<comment type="function">
    <text evidence="1">DNA-dependent RNA polymerase catalyzes the transcription of DNA into RNA using the four ribonucleoside triphosphates as substrates.</text>
</comment>
<comment type="catalytic activity">
    <reaction evidence="1">
        <text>RNA(n) + a ribonucleoside 5'-triphosphate = RNA(n+1) + diphosphate</text>
        <dbReference type="Rhea" id="RHEA:21248"/>
        <dbReference type="Rhea" id="RHEA-COMP:14527"/>
        <dbReference type="Rhea" id="RHEA-COMP:17342"/>
        <dbReference type="ChEBI" id="CHEBI:33019"/>
        <dbReference type="ChEBI" id="CHEBI:61557"/>
        <dbReference type="ChEBI" id="CHEBI:140395"/>
        <dbReference type="EC" id="2.7.7.6"/>
    </reaction>
</comment>
<comment type="subunit">
    <text evidence="1">In cyanobacteria the RNAP catalytic core is composed of 2 alpha, 1 beta, 1 beta', 1 gamma and 1 omega subunit. When a sigma factor is associated with the core the holoenzyme is formed, which can initiate transcription.</text>
</comment>
<comment type="similarity">
    <text evidence="1">Belongs to the RNA polymerase beta chain family.</text>
</comment>
<proteinExistence type="inferred from homology"/>
<organism>
    <name type="scientific">Prochlorococcus marinus (strain NATL1A)</name>
    <dbReference type="NCBI Taxonomy" id="167555"/>
    <lineage>
        <taxon>Bacteria</taxon>
        <taxon>Bacillati</taxon>
        <taxon>Cyanobacteriota</taxon>
        <taxon>Cyanophyceae</taxon>
        <taxon>Synechococcales</taxon>
        <taxon>Prochlorococcaceae</taxon>
        <taxon>Prochlorococcus</taxon>
    </lineage>
</organism>